<evidence type="ECO:0000255" key="1"/>
<evidence type="ECO:0000269" key="2">
    <source>
    </source>
</evidence>
<evidence type="ECO:0000269" key="3">
    <source>
    </source>
</evidence>
<evidence type="ECO:0000305" key="4"/>
<name>NHAP_PSEAE</name>
<gene>
    <name type="primary">nhaP</name>
    <name type="ordered locus">PA3887</name>
</gene>
<comment type="function">
    <text evidence="2 3">Na(+)/H(+) antiporter that extrudes sodium in exchange for external protons. Also has weak Li(+)/H(+) antiport activity.</text>
</comment>
<comment type="activity regulation">
    <text evidence="2">Inhibited by amiloride.</text>
</comment>
<comment type="biophysicochemical properties">
    <kinetics>
        <KM evidence="2 3">6 mM for Na(+) (in the absence of amiloride, at pH 7.5)</KM>
        <KM evidence="2 3">9.2 mM for Na(+) (in the presence of 0.5 mM amiloride, at pH 7.5)</KM>
    </kinetics>
    <phDependence>
        <text evidence="2 3">Optimum pH is 7.5. Almost no activity is detected below pH 7.0 or above pH 8.5.</text>
    </phDependence>
</comment>
<comment type="subcellular location">
    <subcellularLocation>
        <location evidence="3">Cell inner membrane</location>
        <topology evidence="3">Multi-pass membrane protein</topology>
    </subcellularLocation>
</comment>
<comment type="similarity">
    <text evidence="4">Belongs to the monovalent cation:proton antiporter 1 (CPA1) transporter (TC 2.A.36) family.</text>
</comment>
<dbReference type="EMBL" id="AB010827">
    <property type="protein sequence ID" value="BAA31695.1"/>
    <property type="molecule type" value="Genomic_DNA"/>
</dbReference>
<dbReference type="EMBL" id="AE004091">
    <property type="protein sequence ID" value="AAG07274.1"/>
    <property type="molecule type" value="Genomic_DNA"/>
</dbReference>
<dbReference type="PIR" id="C83159">
    <property type="entry name" value="C83159"/>
</dbReference>
<dbReference type="RefSeq" id="NP_252576.1">
    <property type="nucleotide sequence ID" value="NC_002516.2"/>
</dbReference>
<dbReference type="RefSeq" id="WP_003105667.1">
    <property type="nucleotide sequence ID" value="NZ_QZGE01000001.1"/>
</dbReference>
<dbReference type="SMR" id="G3XD29"/>
<dbReference type="STRING" id="208964.PA3887"/>
<dbReference type="TCDB" id="2.A.36.6.8">
    <property type="family name" value="the monovalent cation:proton antiporter-1 (cpa1) family"/>
</dbReference>
<dbReference type="PaxDb" id="208964-PA3887"/>
<dbReference type="GeneID" id="878773"/>
<dbReference type="KEGG" id="pae:PA3887"/>
<dbReference type="PATRIC" id="fig|208964.12.peg.4071"/>
<dbReference type="PseudoCAP" id="PA3887"/>
<dbReference type="HOGENOM" id="CLU_005912_8_1_6"/>
<dbReference type="InParanoid" id="G3XD29"/>
<dbReference type="OrthoDB" id="9774146at2"/>
<dbReference type="PhylomeDB" id="G3XD29"/>
<dbReference type="BioCyc" id="PAER208964:G1FZ6-3960-MONOMER"/>
<dbReference type="Proteomes" id="UP000002438">
    <property type="component" value="Chromosome"/>
</dbReference>
<dbReference type="GO" id="GO:0005886">
    <property type="term" value="C:plasma membrane"/>
    <property type="evidence" value="ECO:0000318"/>
    <property type="project" value="GO_Central"/>
</dbReference>
<dbReference type="GO" id="GO:0015386">
    <property type="term" value="F:potassium:proton antiporter activity"/>
    <property type="evidence" value="ECO:0000318"/>
    <property type="project" value="GO_Central"/>
</dbReference>
<dbReference type="GO" id="GO:0015385">
    <property type="term" value="F:sodium:proton antiporter activity"/>
    <property type="evidence" value="ECO:0000318"/>
    <property type="project" value="GO_Central"/>
</dbReference>
<dbReference type="GO" id="GO:0071805">
    <property type="term" value="P:potassium ion transmembrane transport"/>
    <property type="evidence" value="ECO:0000318"/>
    <property type="project" value="GO_Central"/>
</dbReference>
<dbReference type="GO" id="GO:0051453">
    <property type="term" value="P:regulation of intracellular pH"/>
    <property type="evidence" value="ECO:0000318"/>
    <property type="project" value="GO_Central"/>
</dbReference>
<dbReference type="GO" id="GO:0098719">
    <property type="term" value="P:sodium ion import across plasma membrane"/>
    <property type="evidence" value="ECO:0000318"/>
    <property type="project" value="GO_Central"/>
</dbReference>
<dbReference type="Gene3D" id="6.10.140.1330">
    <property type="match status" value="1"/>
</dbReference>
<dbReference type="InterPro" id="IPR018422">
    <property type="entry name" value="Cation/H_exchanger_CPA1"/>
</dbReference>
<dbReference type="InterPro" id="IPR006153">
    <property type="entry name" value="Cation/H_exchanger_TM"/>
</dbReference>
<dbReference type="PANTHER" id="PTHR10110:SF195">
    <property type="entry name" value="NA(+)_H(+) ANTIPORTER NHAS2"/>
    <property type="match status" value="1"/>
</dbReference>
<dbReference type="PANTHER" id="PTHR10110">
    <property type="entry name" value="SODIUM/HYDROGEN EXCHANGER"/>
    <property type="match status" value="1"/>
</dbReference>
<dbReference type="Pfam" id="PF00999">
    <property type="entry name" value="Na_H_Exchanger"/>
    <property type="match status" value="1"/>
</dbReference>
<reference key="1">
    <citation type="journal article" date="1998" name="Biochim. Biophys. Acta">
        <title>Cloning and sequencing of a novel Na+/H+ antiporter gene from Pseudomonas aeruginosa.</title>
        <authorList>
            <person name="Utsugi J."/>
            <person name="Inaba K."/>
            <person name="Kuroda T."/>
            <person name="Tsuda M."/>
            <person name="Tsuchiya T."/>
        </authorList>
    </citation>
    <scope>NUCLEOTIDE SEQUENCE [GENOMIC DNA]</scope>
    <scope>FUNCTION</scope>
    <scope>BIOPHYSICOCHEMICAL PROPERTIES</scope>
    <scope>SUBCELLULAR LOCATION</scope>
    <source>
        <strain>ATCC 15692 / DSM 22644 / CIP 104116 / JCM 14847 / LMG 12228 / 1C / PRS 101 / PAO1</strain>
    </source>
</reference>
<reference key="2">
    <citation type="journal article" date="2000" name="Nature">
        <title>Complete genome sequence of Pseudomonas aeruginosa PAO1, an opportunistic pathogen.</title>
        <authorList>
            <person name="Stover C.K."/>
            <person name="Pham X.-Q.T."/>
            <person name="Erwin A.L."/>
            <person name="Mizoguchi S.D."/>
            <person name="Warrener P."/>
            <person name="Hickey M.J."/>
            <person name="Brinkman F.S.L."/>
            <person name="Hufnagle W.O."/>
            <person name="Kowalik D.J."/>
            <person name="Lagrou M."/>
            <person name="Garber R.L."/>
            <person name="Goltry L."/>
            <person name="Tolentino E."/>
            <person name="Westbrock-Wadman S."/>
            <person name="Yuan Y."/>
            <person name="Brody L.L."/>
            <person name="Coulter S.N."/>
            <person name="Folger K.R."/>
            <person name="Kas A."/>
            <person name="Larbig K."/>
            <person name="Lim R.M."/>
            <person name="Smith K.A."/>
            <person name="Spencer D.H."/>
            <person name="Wong G.K.-S."/>
            <person name="Wu Z."/>
            <person name="Paulsen I.T."/>
            <person name="Reizer J."/>
            <person name="Saier M.H. Jr."/>
            <person name="Hancock R.E.W."/>
            <person name="Lory S."/>
            <person name="Olson M.V."/>
        </authorList>
    </citation>
    <scope>NUCLEOTIDE SEQUENCE [LARGE SCALE GENOMIC DNA]</scope>
    <source>
        <strain>ATCC 15692 / DSM 22644 / CIP 104116 / JCM 14847 / LMG 12228 / 1C / PRS 101 / PAO1</strain>
    </source>
</reference>
<reference key="3">
    <citation type="journal article" date="2004" name="Microbiol. Immunol.">
        <title>A major Li(+) extrusion system NhaB of Pseudomonas aeruginosa: comparison with the major Na(+) extrusion system NhaP.</title>
        <authorList>
            <person name="Kuroda T."/>
            <person name="Fujita N."/>
            <person name="Utsugi J."/>
            <person name="Kuroda M."/>
            <person name="Mizushima T."/>
            <person name="Tsuchiya T."/>
        </authorList>
    </citation>
    <scope>FUNCTION</scope>
    <scope>ACTIVITY REGULATION</scope>
    <scope>BIOPHYSICOCHEMICAL PROPERTIES</scope>
</reference>
<feature type="chain" id="PRO_0000423862" description="Na(+)/H(+) antiporter NhaP">
    <location>
        <begin position="1"/>
        <end position="424"/>
    </location>
</feature>
<feature type="transmembrane region" description="Helical" evidence="1">
    <location>
        <begin position="3"/>
        <end position="23"/>
    </location>
</feature>
<feature type="transmembrane region" description="Helical" evidence="1">
    <location>
        <begin position="25"/>
        <end position="45"/>
    </location>
</feature>
<feature type="transmembrane region" description="Helical" evidence="1">
    <location>
        <begin position="66"/>
        <end position="86"/>
    </location>
</feature>
<feature type="transmembrane region" description="Helical" evidence="1">
    <location>
        <begin position="96"/>
        <end position="116"/>
    </location>
</feature>
<feature type="transmembrane region" description="Helical" evidence="1">
    <location>
        <begin position="130"/>
        <end position="152"/>
    </location>
</feature>
<feature type="transmembrane region" description="Helical" evidence="1">
    <location>
        <begin position="170"/>
        <end position="190"/>
    </location>
</feature>
<feature type="transmembrane region" description="Helical" evidence="1">
    <location>
        <begin position="200"/>
        <end position="220"/>
    </location>
</feature>
<feature type="transmembrane region" description="Helical" evidence="1">
    <location>
        <begin position="246"/>
        <end position="266"/>
    </location>
</feature>
<feature type="transmembrane region" description="Helical" evidence="1">
    <location>
        <begin position="296"/>
        <end position="316"/>
    </location>
</feature>
<feature type="transmembrane region" description="Helical" evidence="1">
    <location>
        <begin position="320"/>
        <end position="340"/>
    </location>
</feature>
<feature type="transmembrane region" description="Helical" evidence="1">
    <location>
        <begin position="358"/>
        <end position="378"/>
    </location>
</feature>
<feature type="transmembrane region" description="Helical" evidence="1">
    <location>
        <begin position="384"/>
        <end position="404"/>
    </location>
</feature>
<organism>
    <name type="scientific">Pseudomonas aeruginosa (strain ATCC 15692 / DSM 22644 / CIP 104116 / JCM 14847 / LMG 12228 / 1C / PRS 101 / PAO1)</name>
    <dbReference type="NCBI Taxonomy" id="208964"/>
    <lineage>
        <taxon>Bacteria</taxon>
        <taxon>Pseudomonadati</taxon>
        <taxon>Pseudomonadota</taxon>
        <taxon>Gammaproteobacteria</taxon>
        <taxon>Pseudomonadales</taxon>
        <taxon>Pseudomonadaceae</taxon>
        <taxon>Pseudomonas</taxon>
    </lineage>
</organism>
<proteinExistence type="evidence at protein level"/>
<protein>
    <recommendedName>
        <fullName>Na(+)/H(+) antiporter NhaP</fullName>
    </recommendedName>
    <alternativeName>
        <fullName>Sodium/proton antiporter NhaP</fullName>
    </alternativeName>
</protein>
<accession>G3XD29</accession>
<accession>O82871</accession>
<accession>Q7DC93</accession>
<keyword id="KW-0050">Antiport</keyword>
<keyword id="KW-0997">Cell inner membrane</keyword>
<keyword id="KW-1003">Cell membrane</keyword>
<keyword id="KW-0406">Ion transport</keyword>
<keyword id="KW-0472">Membrane</keyword>
<keyword id="KW-1185">Reference proteome</keyword>
<keyword id="KW-0915">Sodium</keyword>
<keyword id="KW-0739">Sodium transport</keyword>
<keyword id="KW-0812">Transmembrane</keyword>
<keyword id="KW-1133">Transmembrane helix</keyword>
<keyword id="KW-0813">Transport</keyword>
<sequence length="424" mass="45486">MLDLVAAFIALTTLLTYVNYRFIRLPPTIGVMATALVFSLIVQGLSELGYPILEVEMQEIIRRIDFSEVLMTWFLPALLFAGALHVDLSDLRSYKWPIGLLATAGVLIATFVIGGLAYYTFPLFGWQVDFIYCLLFGALISPTDPIAVLGILKSAGAPKPLATTIVGESLFNDGTAVVVFAIILGILQLGEAPTVSATAILFVQEAIGGVVFGAVLGYGVFVMMRGIDQYQVEVMLTLALVIGGAALAARLHVSAPIAMVVAGLIIGNHGRHYAMSDETRRYVDKFWELIDEILNALLFALIGLELLLLPFSWLHVAAAFALGGAVLVSRLLTVGPAILVLRRFRGANRQVPAGTIRILVWGGLRGGVSVALALSLPLGPERDLILSLTYIVVLVSILLQGLSIGPLVRRIYAGQPLEKSEGAH</sequence>